<comment type="function">
    <text evidence="1">Converts 2C-methyl-D-erythritol 2,4-cyclodiphosphate (ME-2,4cPP) into 1-hydroxy-2-methyl-2-(E)-butenyl 4-diphosphate.</text>
</comment>
<comment type="catalytic activity">
    <reaction evidence="1">
        <text>(2E)-4-hydroxy-3-methylbut-2-enyl diphosphate + oxidized [flavodoxin] + H2O + 2 H(+) = 2-C-methyl-D-erythritol 2,4-cyclic diphosphate + reduced [flavodoxin]</text>
        <dbReference type="Rhea" id="RHEA:43604"/>
        <dbReference type="Rhea" id="RHEA-COMP:10622"/>
        <dbReference type="Rhea" id="RHEA-COMP:10623"/>
        <dbReference type="ChEBI" id="CHEBI:15377"/>
        <dbReference type="ChEBI" id="CHEBI:15378"/>
        <dbReference type="ChEBI" id="CHEBI:57618"/>
        <dbReference type="ChEBI" id="CHEBI:58210"/>
        <dbReference type="ChEBI" id="CHEBI:58483"/>
        <dbReference type="ChEBI" id="CHEBI:128753"/>
        <dbReference type="EC" id="1.17.7.3"/>
    </reaction>
</comment>
<comment type="cofactor">
    <cofactor evidence="1">
        <name>[4Fe-4S] cluster</name>
        <dbReference type="ChEBI" id="CHEBI:49883"/>
    </cofactor>
    <text evidence="1">Binds 1 [4Fe-4S] cluster.</text>
</comment>
<comment type="pathway">
    <text evidence="1">Isoprenoid biosynthesis; isopentenyl diphosphate biosynthesis via DXP pathway; isopentenyl diphosphate from 1-deoxy-D-xylulose 5-phosphate: step 5/6.</text>
</comment>
<comment type="similarity">
    <text evidence="1">Belongs to the IspG family.</text>
</comment>
<organism>
    <name type="scientific">Ruegeria pomeroyi (strain ATCC 700808 / DSM 15171 / DSS-3)</name>
    <name type="common">Silicibacter pomeroyi</name>
    <dbReference type="NCBI Taxonomy" id="246200"/>
    <lineage>
        <taxon>Bacteria</taxon>
        <taxon>Pseudomonadati</taxon>
        <taxon>Pseudomonadota</taxon>
        <taxon>Alphaproteobacteria</taxon>
        <taxon>Rhodobacterales</taxon>
        <taxon>Roseobacteraceae</taxon>
        <taxon>Ruegeria</taxon>
    </lineage>
</organism>
<sequence length="375" mass="39804">MSHNPVRPWRNVYRRKSRQIMVGNVPVGGDAPISVQTMTNTLTTDVAATVAQVQAAAEAGADIVRVSVPDEASARALREIVRESPVPIVADIHFHYRRGIEAAEAGAACLRINPGNIGSPDRVREVIRAARDHGCSIRIGVNAGSLEKHLLEKYGEPCPEAMVESGLEHIRILQDNDFHEYKISVKASDVFLSAAAYQGIAEATDAPIHLGITEAGGLVSGTIKSAIGLGNLLWMGIGDTIRVSLSADPVEEVKVGYEILKSLGLRHRGVNIISCPSCARQGFDVIKTVEALEKRLEHIKTPMSLSIIGCVVNGPGEALMTDVGFTGGGAGSGMVYLAGKASHKMSNERMIDHIVEEVEKKAAALDAASAAEAAE</sequence>
<keyword id="KW-0004">4Fe-4S</keyword>
<keyword id="KW-0408">Iron</keyword>
<keyword id="KW-0411">Iron-sulfur</keyword>
<keyword id="KW-0414">Isoprene biosynthesis</keyword>
<keyword id="KW-0479">Metal-binding</keyword>
<keyword id="KW-0560">Oxidoreductase</keyword>
<keyword id="KW-1185">Reference proteome</keyword>
<feature type="chain" id="PRO_0000190632" description="4-hydroxy-3-methylbut-2-en-1-yl diphosphate synthase (flavodoxin)">
    <location>
        <begin position="1"/>
        <end position="375"/>
    </location>
</feature>
<feature type="binding site" evidence="1">
    <location>
        <position position="275"/>
    </location>
    <ligand>
        <name>[4Fe-4S] cluster</name>
        <dbReference type="ChEBI" id="CHEBI:49883"/>
    </ligand>
</feature>
<feature type="binding site" evidence="1">
    <location>
        <position position="278"/>
    </location>
    <ligand>
        <name>[4Fe-4S] cluster</name>
        <dbReference type="ChEBI" id="CHEBI:49883"/>
    </ligand>
</feature>
<feature type="binding site" evidence="1">
    <location>
        <position position="310"/>
    </location>
    <ligand>
        <name>[4Fe-4S] cluster</name>
        <dbReference type="ChEBI" id="CHEBI:49883"/>
    </ligand>
</feature>
<feature type="binding site" evidence="1">
    <location>
        <position position="317"/>
    </location>
    <ligand>
        <name>[4Fe-4S] cluster</name>
        <dbReference type="ChEBI" id="CHEBI:49883"/>
    </ligand>
</feature>
<evidence type="ECO:0000255" key="1">
    <source>
        <dbReference type="HAMAP-Rule" id="MF_00159"/>
    </source>
</evidence>
<name>ISPG_RUEPO</name>
<dbReference type="EC" id="1.17.7.3" evidence="1"/>
<dbReference type="EMBL" id="CP000031">
    <property type="protein sequence ID" value="AAV95842.1"/>
    <property type="molecule type" value="Genomic_DNA"/>
</dbReference>
<dbReference type="RefSeq" id="WP_011048299.1">
    <property type="nucleotide sequence ID" value="NC_003911.12"/>
</dbReference>
<dbReference type="SMR" id="Q5LQ99"/>
<dbReference type="STRING" id="246200.SPO2594"/>
<dbReference type="PaxDb" id="246200-SPO2594"/>
<dbReference type="KEGG" id="sil:SPO2594"/>
<dbReference type="eggNOG" id="COG0821">
    <property type="taxonomic scope" value="Bacteria"/>
</dbReference>
<dbReference type="HOGENOM" id="CLU_042258_0_0_5"/>
<dbReference type="OrthoDB" id="9803214at2"/>
<dbReference type="UniPathway" id="UPA00056">
    <property type="reaction ID" value="UER00096"/>
</dbReference>
<dbReference type="Proteomes" id="UP000001023">
    <property type="component" value="Chromosome"/>
</dbReference>
<dbReference type="GO" id="GO:0051539">
    <property type="term" value="F:4 iron, 4 sulfur cluster binding"/>
    <property type="evidence" value="ECO:0007669"/>
    <property type="project" value="UniProtKB-UniRule"/>
</dbReference>
<dbReference type="GO" id="GO:0046429">
    <property type="term" value="F:4-hydroxy-3-methylbut-2-en-1-yl diphosphate synthase activity (ferredoxin)"/>
    <property type="evidence" value="ECO:0007669"/>
    <property type="project" value="UniProtKB-UniRule"/>
</dbReference>
<dbReference type="GO" id="GO:0141197">
    <property type="term" value="F:4-hydroxy-3-methylbut-2-enyl-diphosphate synthase activity (flavodoxin)"/>
    <property type="evidence" value="ECO:0007669"/>
    <property type="project" value="UniProtKB-EC"/>
</dbReference>
<dbReference type="GO" id="GO:0005506">
    <property type="term" value="F:iron ion binding"/>
    <property type="evidence" value="ECO:0007669"/>
    <property type="project" value="InterPro"/>
</dbReference>
<dbReference type="GO" id="GO:0019288">
    <property type="term" value="P:isopentenyl diphosphate biosynthetic process, methylerythritol 4-phosphate pathway"/>
    <property type="evidence" value="ECO:0007669"/>
    <property type="project" value="UniProtKB-UniRule"/>
</dbReference>
<dbReference type="GO" id="GO:0016114">
    <property type="term" value="P:terpenoid biosynthetic process"/>
    <property type="evidence" value="ECO:0007669"/>
    <property type="project" value="InterPro"/>
</dbReference>
<dbReference type="FunFam" id="3.20.20.20:FF:000001">
    <property type="entry name" value="4-hydroxy-3-methylbut-2-en-1-yl diphosphate synthase (flavodoxin)"/>
    <property type="match status" value="1"/>
</dbReference>
<dbReference type="Gene3D" id="3.20.20.20">
    <property type="entry name" value="Dihydropteroate synthase-like"/>
    <property type="match status" value="1"/>
</dbReference>
<dbReference type="Gene3D" id="3.30.413.10">
    <property type="entry name" value="Sulfite Reductase Hemoprotein, domain 1"/>
    <property type="match status" value="1"/>
</dbReference>
<dbReference type="HAMAP" id="MF_00159">
    <property type="entry name" value="IspG"/>
    <property type="match status" value="1"/>
</dbReference>
<dbReference type="InterPro" id="IPR011005">
    <property type="entry name" value="Dihydropteroate_synth-like_sf"/>
</dbReference>
<dbReference type="InterPro" id="IPR016425">
    <property type="entry name" value="IspG_bac"/>
</dbReference>
<dbReference type="InterPro" id="IPR004588">
    <property type="entry name" value="IspG_bac-typ"/>
</dbReference>
<dbReference type="InterPro" id="IPR045854">
    <property type="entry name" value="NO2/SO3_Rdtase_4Fe4S_sf"/>
</dbReference>
<dbReference type="NCBIfam" id="TIGR00612">
    <property type="entry name" value="ispG_gcpE"/>
    <property type="match status" value="1"/>
</dbReference>
<dbReference type="NCBIfam" id="NF001540">
    <property type="entry name" value="PRK00366.1"/>
    <property type="match status" value="1"/>
</dbReference>
<dbReference type="PANTHER" id="PTHR30454">
    <property type="entry name" value="4-HYDROXY-3-METHYLBUT-2-EN-1-YL DIPHOSPHATE SYNTHASE"/>
    <property type="match status" value="1"/>
</dbReference>
<dbReference type="PANTHER" id="PTHR30454:SF0">
    <property type="entry name" value="4-HYDROXY-3-METHYLBUT-2-EN-1-YL DIPHOSPHATE SYNTHASE (FERREDOXIN), CHLOROPLASTIC"/>
    <property type="match status" value="1"/>
</dbReference>
<dbReference type="Pfam" id="PF04551">
    <property type="entry name" value="GcpE"/>
    <property type="match status" value="1"/>
</dbReference>
<dbReference type="PIRSF" id="PIRSF004640">
    <property type="entry name" value="IspG"/>
    <property type="match status" value="1"/>
</dbReference>
<dbReference type="SUPFAM" id="SSF51717">
    <property type="entry name" value="Dihydropteroate synthetase-like"/>
    <property type="match status" value="1"/>
</dbReference>
<dbReference type="SUPFAM" id="SSF56014">
    <property type="entry name" value="Nitrite and sulphite reductase 4Fe-4S domain-like"/>
    <property type="match status" value="1"/>
</dbReference>
<reference key="1">
    <citation type="journal article" date="2004" name="Nature">
        <title>Genome sequence of Silicibacter pomeroyi reveals adaptations to the marine environment.</title>
        <authorList>
            <person name="Moran M.A."/>
            <person name="Buchan A."/>
            <person name="Gonzalez J.M."/>
            <person name="Heidelberg J.F."/>
            <person name="Whitman W.B."/>
            <person name="Kiene R.P."/>
            <person name="Henriksen J.R."/>
            <person name="King G.M."/>
            <person name="Belas R."/>
            <person name="Fuqua C."/>
            <person name="Brinkac L.M."/>
            <person name="Lewis M."/>
            <person name="Johri S."/>
            <person name="Weaver B."/>
            <person name="Pai G."/>
            <person name="Eisen J.A."/>
            <person name="Rahe E."/>
            <person name="Sheldon W.M."/>
            <person name="Ye W."/>
            <person name="Miller T.R."/>
            <person name="Carlton J."/>
            <person name="Rasko D.A."/>
            <person name="Paulsen I.T."/>
            <person name="Ren Q."/>
            <person name="Daugherty S.C."/>
            <person name="DeBoy R.T."/>
            <person name="Dodson R.J."/>
            <person name="Durkin A.S."/>
            <person name="Madupu R."/>
            <person name="Nelson W.C."/>
            <person name="Sullivan S.A."/>
            <person name="Rosovitz M.J."/>
            <person name="Haft D.H."/>
            <person name="Selengut J."/>
            <person name="Ward N."/>
        </authorList>
    </citation>
    <scope>NUCLEOTIDE SEQUENCE [LARGE SCALE GENOMIC DNA]</scope>
    <source>
        <strain>ATCC 700808 / DSM 15171 / DSS-3</strain>
    </source>
</reference>
<reference key="2">
    <citation type="journal article" date="2014" name="Stand. Genomic Sci.">
        <title>An updated genome annotation for the model marine bacterium Ruegeria pomeroyi DSS-3.</title>
        <authorList>
            <person name="Rivers A.R."/>
            <person name="Smith C.B."/>
            <person name="Moran M.A."/>
        </authorList>
    </citation>
    <scope>GENOME REANNOTATION</scope>
    <source>
        <strain>ATCC 700808 / DSM 15171 / DSS-3</strain>
    </source>
</reference>
<protein>
    <recommendedName>
        <fullName evidence="1">4-hydroxy-3-methylbut-2-en-1-yl diphosphate synthase (flavodoxin)</fullName>
        <ecNumber evidence="1">1.17.7.3</ecNumber>
    </recommendedName>
    <alternativeName>
        <fullName evidence="1">1-hydroxy-2-methyl-2-(E)-butenyl 4-diphosphate synthase</fullName>
    </alternativeName>
</protein>
<gene>
    <name evidence="1" type="primary">ispG</name>
    <name type="ordered locus">SPO2594</name>
</gene>
<accession>Q5LQ99</accession>
<proteinExistence type="inferred from homology"/>